<keyword id="KW-1185">Reference proteome</keyword>
<proteinExistence type="inferred from homology"/>
<accession>Q99ZE6</accession>
<accession>Q48YI2</accession>
<gene>
    <name type="ordered locus">SPy_1261</name>
    <name type="ordered locus">M5005_Spy0972</name>
</gene>
<evidence type="ECO:0000305" key="1"/>
<sequence length="66" mass="7026">MSDEKYNAKLDQAGGKLKEGFGKISGDKSLETEGKVDKVTGKVKEVIADAKDTVKGLAKGLDNKDK</sequence>
<dbReference type="EMBL" id="AE004092">
    <property type="protein sequence ID" value="AAK34115.1"/>
    <property type="molecule type" value="Genomic_DNA"/>
</dbReference>
<dbReference type="EMBL" id="CP000017">
    <property type="protein sequence ID" value="AAZ51590.1"/>
    <property type="molecule type" value="Genomic_DNA"/>
</dbReference>
<dbReference type="RefSeq" id="NP_269394.1">
    <property type="nucleotide sequence ID" value="NC_002737.2"/>
</dbReference>
<dbReference type="SMR" id="Q99ZE6"/>
<dbReference type="PaxDb" id="1314-HKU360_01015"/>
<dbReference type="KEGG" id="spy:SPy_1261"/>
<dbReference type="KEGG" id="spz:M5005_Spy0972"/>
<dbReference type="PATRIC" id="fig|160490.10.peg.1104"/>
<dbReference type="HOGENOM" id="CLU_135567_0_0_9"/>
<dbReference type="OMA" id="GVKNMIN"/>
<dbReference type="Proteomes" id="UP000000750">
    <property type="component" value="Chromosome"/>
</dbReference>
<dbReference type="Gene3D" id="1.10.1470.10">
    <property type="entry name" value="YjbJ"/>
    <property type="match status" value="1"/>
</dbReference>
<dbReference type="InterPro" id="IPR008462">
    <property type="entry name" value="CsbD"/>
</dbReference>
<dbReference type="InterPro" id="IPR036629">
    <property type="entry name" value="YjbJ_sf"/>
</dbReference>
<dbReference type="Pfam" id="PF05532">
    <property type="entry name" value="CsbD"/>
    <property type="match status" value="1"/>
</dbReference>
<dbReference type="SUPFAM" id="SSF69047">
    <property type="entry name" value="Hypothetical protein YjbJ"/>
    <property type="match status" value="1"/>
</dbReference>
<name>Y1261_STRP1</name>
<feature type="chain" id="PRO_0000210050" description="UPF0337 protein SPy_1261/M5005_Spy0972">
    <location>
        <begin position="1"/>
        <end position="66"/>
    </location>
</feature>
<reference key="1">
    <citation type="journal article" date="2001" name="Proc. Natl. Acad. Sci. U.S.A.">
        <title>Complete genome sequence of an M1 strain of Streptococcus pyogenes.</title>
        <authorList>
            <person name="Ferretti J.J."/>
            <person name="McShan W.M."/>
            <person name="Ajdic D.J."/>
            <person name="Savic D.J."/>
            <person name="Savic G."/>
            <person name="Lyon K."/>
            <person name="Primeaux C."/>
            <person name="Sezate S."/>
            <person name="Suvorov A.N."/>
            <person name="Kenton S."/>
            <person name="Lai H.S."/>
            <person name="Lin S.P."/>
            <person name="Qian Y."/>
            <person name="Jia H.G."/>
            <person name="Najar F.Z."/>
            <person name="Ren Q."/>
            <person name="Zhu H."/>
            <person name="Song L."/>
            <person name="White J."/>
            <person name="Yuan X."/>
            <person name="Clifton S.W."/>
            <person name="Roe B.A."/>
            <person name="McLaughlin R.E."/>
        </authorList>
    </citation>
    <scope>NUCLEOTIDE SEQUENCE [LARGE SCALE GENOMIC DNA]</scope>
    <source>
        <strain>ATCC 700294 / SF370 / Serotype M1</strain>
    </source>
</reference>
<reference key="2">
    <citation type="journal article" date="2005" name="J. Infect. Dis.">
        <title>Evolutionary origin and emergence of a highly successful clone of serotype M1 group A Streptococcus involved multiple horizontal gene transfer events.</title>
        <authorList>
            <person name="Sumby P."/>
            <person name="Porcella S.F."/>
            <person name="Madrigal A.G."/>
            <person name="Barbian K.D."/>
            <person name="Virtaneva K."/>
            <person name="Ricklefs S.M."/>
            <person name="Sturdevant D.E."/>
            <person name="Graham M.R."/>
            <person name="Vuopio-Varkila J."/>
            <person name="Hoe N.P."/>
            <person name="Musser J.M."/>
        </authorList>
    </citation>
    <scope>NUCLEOTIDE SEQUENCE [LARGE SCALE GENOMIC DNA]</scope>
    <source>
        <strain>ATCC BAA-947 / MGAS5005 / Serotype M1</strain>
    </source>
</reference>
<comment type="similarity">
    <text evidence="1">Belongs to the UPF0337 (CsbD) family.</text>
</comment>
<protein>
    <recommendedName>
        <fullName>UPF0337 protein SPy_1261/M5005_Spy0972</fullName>
    </recommendedName>
</protein>
<organism>
    <name type="scientific">Streptococcus pyogenes serotype M1</name>
    <dbReference type="NCBI Taxonomy" id="301447"/>
    <lineage>
        <taxon>Bacteria</taxon>
        <taxon>Bacillati</taxon>
        <taxon>Bacillota</taxon>
        <taxon>Bacilli</taxon>
        <taxon>Lactobacillales</taxon>
        <taxon>Streptococcaceae</taxon>
        <taxon>Streptococcus</taxon>
    </lineage>
</organism>